<evidence type="ECO:0000250" key="1">
    <source>
        <dbReference type="UniProtKB" id="Q3UZA1"/>
    </source>
</evidence>
<evidence type="ECO:0000256" key="2">
    <source>
        <dbReference type="SAM" id="MobiDB-lite"/>
    </source>
</evidence>
<evidence type="ECO:0000269" key="3">
    <source>
    </source>
</evidence>
<evidence type="ECO:0000303" key="4">
    <source>
    </source>
</evidence>
<evidence type="ECO:0000305" key="5"/>
<evidence type="ECO:0007744" key="6">
    <source>
    </source>
</evidence>
<evidence type="ECO:0007744" key="7">
    <source>
    </source>
</evidence>
<evidence type="ECO:0007744" key="8">
    <source>
    </source>
</evidence>
<evidence type="ECO:0007744" key="9">
    <source>
    </source>
</evidence>
<name>CPZIP_HUMAN</name>
<proteinExistence type="evidence at protein level"/>
<gene>
    <name type="primary">RCSD1</name>
    <name type="synonym">CAPZIP</name>
</gene>
<comment type="function">
    <text evidence="3">Stress-induced phosphorylation of CAPZIP may regulate the ability of F-actin-capping protein to remodel actin filament assembly.</text>
</comment>
<comment type="subunit">
    <text evidence="3">Interacts with CAPZA2 and CAPZB.</text>
</comment>
<comment type="alternative products">
    <event type="alternative splicing"/>
    <isoform>
        <id>Q6JBY9-1</id>
        <name>1</name>
        <sequence type="displayed"/>
    </isoform>
    <isoform>
        <id>Q6JBY9-2</id>
        <name>2</name>
        <sequence type="described" ref="VSP_031648"/>
    </isoform>
</comment>
<comment type="tissue specificity">
    <text evidence="3">Highly expressed in skeletal muscle and more weakly in cardiac muscle. Also expressed in several lymphoid organs, including spleen, thymus, peripheral blood leukocytes, lymph node and bone marrow.</text>
</comment>
<comment type="PTM">
    <text>Dephosphorylation results in its dissociation from CAPZA2.</text>
</comment>
<comment type="sequence caution" evidence="5">
    <conflict type="erroneous initiation">
        <sequence resource="EMBL-CDS" id="CAB70910"/>
    </conflict>
</comment>
<sequence>MEERPAETNANVDNSASPSVAQLAGRFREQAAAAKETPASKPTRRKPPCSLPLFPPKVDLGQNGEEKSPPNASHPPKFKVKSSPLIEKLQANLTFDPAALLPGASPKSPGLKAMVSPFHSPPSTPSSPGVRSRPSEAEEVPVSFDQPPEGSHLPCYNKVRTRGSIKRRPPSRRFRRSQSDCGELGDFRAVESSQQNGAKEEDGDEVLPSKSKAPGSPLSSEGAAGEGVRTLGPAEKPPLRRSPSRTEKQEEDRATEEAKNGEKARRSSEEVDGQHPAQEEVPESPQTSGPEAENRCGSPREEKPAGEEAEMEKATEVKGERVQNEEVGPEHDSQETKKLEEGAAVKETPHSPPGGVKGGDVPKQEKGKEKQQEGAVLEPGCSPQTGPAQLETSSEVQSEPAVPKPEDDTPVQDTKM</sequence>
<protein>
    <recommendedName>
        <fullName>CapZ-interacting protein</fullName>
    </recommendedName>
    <alternativeName>
        <fullName>Protein kinase substrate CapZIP</fullName>
    </alternativeName>
    <alternativeName>
        <fullName>RCSD domain-containing protein 1</fullName>
    </alternativeName>
</protein>
<accession>Q6JBY9</accession>
<accession>B1AK48</accession>
<accession>Q4G0E7</accession>
<accession>Q6IN93</accession>
<accession>Q8IZM2</accession>
<accession>Q96DX0</accession>
<accession>Q9NST4</accession>
<organism>
    <name type="scientific">Homo sapiens</name>
    <name type="common">Human</name>
    <dbReference type="NCBI Taxonomy" id="9606"/>
    <lineage>
        <taxon>Eukaryota</taxon>
        <taxon>Metazoa</taxon>
        <taxon>Chordata</taxon>
        <taxon>Craniata</taxon>
        <taxon>Vertebrata</taxon>
        <taxon>Euteleostomi</taxon>
        <taxon>Mammalia</taxon>
        <taxon>Eutheria</taxon>
        <taxon>Euarchontoglires</taxon>
        <taxon>Primates</taxon>
        <taxon>Haplorrhini</taxon>
        <taxon>Catarrhini</taxon>
        <taxon>Hominidae</taxon>
        <taxon>Homo</taxon>
    </lineage>
</organism>
<reference key="1">
    <citation type="journal article" date="2005" name="Biochem. J.">
        <title>The phosphorylation of CapZ-interacting protein (CapZIP) by stress-activated protein kinases triggers its dissociation from CapZ.</title>
        <authorList>
            <person name="Eyers C.E."/>
            <person name="McNeill H."/>
            <person name="Knebel A."/>
            <person name="Morrice N."/>
            <person name="Arthur S.J.C."/>
            <person name="Cuenda A."/>
            <person name="Cohen P."/>
        </authorList>
    </citation>
    <scope>NUCLEOTIDE SEQUENCE [MRNA] (ISOFORM 1)</scope>
    <scope>FUNCTION</scope>
    <scope>INTERACTION WITH CAPZA2 AND CAPZB</scope>
    <scope>TISSUE SPECIFICITY</scope>
    <scope>PHOSPHORYLATION AT SER-68; SER-83; SER-108; SER-179; SER-216 AND SER-244</scope>
</reference>
<reference key="2">
    <citation type="submission" date="2002-09" db="EMBL/GenBank/DDBJ databases">
        <authorList>
            <person name="Guo J.H."/>
        </authorList>
    </citation>
    <scope>NUCLEOTIDE SEQUENCE [LARGE SCALE MRNA] (ISOFORM 1)</scope>
    <source>
        <tissue>Blood</tissue>
    </source>
</reference>
<reference key="3">
    <citation type="submission" date="2005-07" db="EMBL/GenBank/DDBJ databases">
        <authorList>
            <person name="Mural R.J."/>
            <person name="Istrail S."/>
            <person name="Sutton G.G."/>
            <person name="Florea L."/>
            <person name="Halpern A.L."/>
            <person name="Mobarry C.M."/>
            <person name="Lippert R."/>
            <person name="Walenz B."/>
            <person name="Shatkay H."/>
            <person name="Dew I."/>
            <person name="Miller J.R."/>
            <person name="Flanigan M.J."/>
            <person name="Edwards N.J."/>
            <person name="Bolanos R."/>
            <person name="Fasulo D."/>
            <person name="Halldorsson B.V."/>
            <person name="Hannenhalli S."/>
            <person name="Turner R."/>
            <person name="Yooseph S."/>
            <person name="Lu F."/>
            <person name="Nusskern D.R."/>
            <person name="Shue B.C."/>
            <person name="Zheng X.H."/>
            <person name="Zhong F."/>
            <person name="Delcher A.L."/>
            <person name="Huson D.H."/>
            <person name="Kravitz S.A."/>
            <person name="Mouchard L."/>
            <person name="Reinert K."/>
            <person name="Remington K.A."/>
            <person name="Clark A.G."/>
            <person name="Waterman M.S."/>
            <person name="Eichler E.E."/>
            <person name="Adams M.D."/>
            <person name="Hunkapiller M.W."/>
            <person name="Myers E.W."/>
            <person name="Venter J.C."/>
        </authorList>
    </citation>
    <scope>NUCLEOTIDE SEQUENCE [LARGE SCALE GENOMIC DNA]</scope>
</reference>
<reference key="4">
    <citation type="journal article" date="2006" name="Nature">
        <title>The DNA sequence and biological annotation of human chromosome 1.</title>
        <authorList>
            <person name="Gregory S.G."/>
            <person name="Barlow K.F."/>
            <person name="McLay K.E."/>
            <person name="Kaul R."/>
            <person name="Swarbreck D."/>
            <person name="Dunham A."/>
            <person name="Scott C.E."/>
            <person name="Howe K.L."/>
            <person name="Woodfine K."/>
            <person name="Spencer C.C.A."/>
            <person name="Jones M.C."/>
            <person name="Gillson C."/>
            <person name="Searle S."/>
            <person name="Zhou Y."/>
            <person name="Kokocinski F."/>
            <person name="McDonald L."/>
            <person name="Evans R."/>
            <person name="Phillips K."/>
            <person name="Atkinson A."/>
            <person name="Cooper R."/>
            <person name="Jones C."/>
            <person name="Hall R.E."/>
            <person name="Andrews T.D."/>
            <person name="Lloyd C."/>
            <person name="Ainscough R."/>
            <person name="Almeida J.P."/>
            <person name="Ambrose K.D."/>
            <person name="Anderson F."/>
            <person name="Andrew R.W."/>
            <person name="Ashwell R.I.S."/>
            <person name="Aubin K."/>
            <person name="Babbage A.K."/>
            <person name="Bagguley C.L."/>
            <person name="Bailey J."/>
            <person name="Beasley H."/>
            <person name="Bethel G."/>
            <person name="Bird C.P."/>
            <person name="Bray-Allen S."/>
            <person name="Brown J.Y."/>
            <person name="Brown A.J."/>
            <person name="Buckley D."/>
            <person name="Burton J."/>
            <person name="Bye J."/>
            <person name="Carder C."/>
            <person name="Chapman J.C."/>
            <person name="Clark S.Y."/>
            <person name="Clarke G."/>
            <person name="Clee C."/>
            <person name="Cobley V."/>
            <person name="Collier R.E."/>
            <person name="Corby N."/>
            <person name="Coville G.J."/>
            <person name="Davies J."/>
            <person name="Deadman R."/>
            <person name="Dunn M."/>
            <person name="Earthrowl M."/>
            <person name="Ellington A.G."/>
            <person name="Errington H."/>
            <person name="Frankish A."/>
            <person name="Frankland J."/>
            <person name="French L."/>
            <person name="Garner P."/>
            <person name="Garnett J."/>
            <person name="Gay L."/>
            <person name="Ghori M.R.J."/>
            <person name="Gibson R."/>
            <person name="Gilby L.M."/>
            <person name="Gillett W."/>
            <person name="Glithero R.J."/>
            <person name="Grafham D.V."/>
            <person name="Griffiths C."/>
            <person name="Griffiths-Jones S."/>
            <person name="Grocock R."/>
            <person name="Hammond S."/>
            <person name="Harrison E.S.I."/>
            <person name="Hart E."/>
            <person name="Haugen E."/>
            <person name="Heath P.D."/>
            <person name="Holmes S."/>
            <person name="Holt K."/>
            <person name="Howden P.J."/>
            <person name="Hunt A.R."/>
            <person name="Hunt S.E."/>
            <person name="Hunter G."/>
            <person name="Isherwood J."/>
            <person name="James R."/>
            <person name="Johnson C."/>
            <person name="Johnson D."/>
            <person name="Joy A."/>
            <person name="Kay M."/>
            <person name="Kershaw J.K."/>
            <person name="Kibukawa M."/>
            <person name="Kimberley A.M."/>
            <person name="King A."/>
            <person name="Knights A.J."/>
            <person name="Lad H."/>
            <person name="Laird G."/>
            <person name="Lawlor S."/>
            <person name="Leongamornlert D.A."/>
            <person name="Lloyd D.M."/>
            <person name="Loveland J."/>
            <person name="Lovell J."/>
            <person name="Lush M.J."/>
            <person name="Lyne R."/>
            <person name="Martin S."/>
            <person name="Mashreghi-Mohammadi M."/>
            <person name="Matthews L."/>
            <person name="Matthews N.S.W."/>
            <person name="McLaren S."/>
            <person name="Milne S."/>
            <person name="Mistry S."/>
            <person name="Moore M.J.F."/>
            <person name="Nickerson T."/>
            <person name="O'Dell C.N."/>
            <person name="Oliver K."/>
            <person name="Palmeiri A."/>
            <person name="Palmer S.A."/>
            <person name="Parker A."/>
            <person name="Patel D."/>
            <person name="Pearce A.V."/>
            <person name="Peck A.I."/>
            <person name="Pelan S."/>
            <person name="Phelps K."/>
            <person name="Phillimore B.J."/>
            <person name="Plumb R."/>
            <person name="Rajan J."/>
            <person name="Raymond C."/>
            <person name="Rouse G."/>
            <person name="Saenphimmachak C."/>
            <person name="Sehra H.K."/>
            <person name="Sheridan E."/>
            <person name="Shownkeen R."/>
            <person name="Sims S."/>
            <person name="Skuce C.D."/>
            <person name="Smith M."/>
            <person name="Steward C."/>
            <person name="Subramanian S."/>
            <person name="Sycamore N."/>
            <person name="Tracey A."/>
            <person name="Tromans A."/>
            <person name="Van Helmond Z."/>
            <person name="Wall M."/>
            <person name="Wallis J.M."/>
            <person name="White S."/>
            <person name="Whitehead S.L."/>
            <person name="Wilkinson J.E."/>
            <person name="Willey D.L."/>
            <person name="Williams H."/>
            <person name="Wilming L."/>
            <person name="Wray P.W."/>
            <person name="Wu Z."/>
            <person name="Coulson A."/>
            <person name="Vaudin M."/>
            <person name="Sulston J.E."/>
            <person name="Durbin R.M."/>
            <person name="Hubbard T."/>
            <person name="Wooster R."/>
            <person name="Dunham I."/>
            <person name="Carter N.P."/>
            <person name="McVean G."/>
            <person name="Ross M.T."/>
            <person name="Harrow J."/>
            <person name="Olson M.V."/>
            <person name="Beck S."/>
            <person name="Rogers J."/>
            <person name="Bentley D.R."/>
        </authorList>
    </citation>
    <scope>NUCLEOTIDE SEQUENCE [LARGE SCALE GENOMIC DNA]</scope>
</reference>
<reference key="5">
    <citation type="journal article" date="2004" name="Genome Res.">
        <title>The status, quality, and expansion of the NIH full-length cDNA project: the Mammalian Gene Collection (MGC).</title>
        <authorList>
            <consortium name="The MGC Project Team"/>
        </authorList>
    </citation>
    <scope>NUCLEOTIDE SEQUENCE [LARGE SCALE MRNA] (ISOFORMS 1 AND 2)</scope>
    <source>
        <tissue>Blood</tissue>
        <tissue>Brain</tissue>
        <tissue>Lymph</tissue>
    </source>
</reference>
<reference key="6">
    <citation type="submission" date="2000-01" db="EMBL/GenBank/DDBJ databases">
        <authorList>
            <person name="Rhodes S."/>
            <person name="Huckle E."/>
        </authorList>
    </citation>
    <scope>NUCLEOTIDE SEQUENCE [LARGE SCALE MRNA] OF 1-406 (ISOFORM 1)</scope>
</reference>
<reference key="7">
    <citation type="journal article" date="2008" name="J. Proteome Res.">
        <title>Phosphorylation analysis of primary human T lymphocytes using sequential IMAC and titanium oxide enrichment.</title>
        <authorList>
            <person name="Carrascal M."/>
            <person name="Ovelleiro D."/>
            <person name="Casas V."/>
            <person name="Gay M."/>
            <person name="Abian J."/>
        </authorList>
    </citation>
    <scope>IDENTIFICATION BY MASS SPECTROMETRY [LARGE SCALE ANALYSIS]</scope>
    <source>
        <tissue>T-cell</tissue>
    </source>
</reference>
<reference key="8">
    <citation type="journal article" date="2009" name="Mol. Cell. Proteomics">
        <title>Large-scale proteomics analysis of the human kinome.</title>
        <authorList>
            <person name="Oppermann F.S."/>
            <person name="Gnad F."/>
            <person name="Olsen J.V."/>
            <person name="Hornberger R."/>
            <person name="Greff Z."/>
            <person name="Keri G."/>
            <person name="Mann M."/>
            <person name="Daub H."/>
        </authorList>
    </citation>
    <scope>PHOSPHORYLATION [LARGE SCALE ANALYSIS] AT SER-216</scope>
    <scope>IDENTIFICATION BY MASS SPECTROMETRY [LARGE SCALE ANALYSIS]</scope>
</reference>
<reference key="9">
    <citation type="journal article" date="2009" name="Sci. Signal.">
        <title>Quantitative phosphoproteomic analysis of T cell receptor signaling reveals system-wide modulation of protein-protein interactions.</title>
        <authorList>
            <person name="Mayya V."/>
            <person name="Lundgren D.H."/>
            <person name="Hwang S.-I."/>
            <person name="Rezaul K."/>
            <person name="Wu L."/>
            <person name="Eng J.K."/>
            <person name="Rodionov V."/>
            <person name="Han D.K."/>
        </authorList>
    </citation>
    <scope>PHOSPHORYLATION [LARGE SCALE ANALYSIS] AT SER-105; SER-108; SER-116; SER-120; SER-123; SER-177; SER-179; SER-216; SER-267; SER-268 AND SER-284</scope>
    <scope>IDENTIFICATION BY MASS SPECTROMETRY [LARGE SCALE ANALYSIS]</scope>
    <source>
        <tissue>Leukemic T-cell</tissue>
    </source>
</reference>
<reference key="10">
    <citation type="journal article" date="2011" name="BMC Syst. Biol.">
        <title>Initial characterization of the human central proteome.</title>
        <authorList>
            <person name="Burkard T.R."/>
            <person name="Planyavsky M."/>
            <person name="Kaupe I."/>
            <person name="Breitwieser F.P."/>
            <person name="Buerckstuemmer T."/>
            <person name="Bennett K.L."/>
            <person name="Superti-Furga G."/>
            <person name="Colinge J."/>
        </authorList>
    </citation>
    <scope>IDENTIFICATION BY MASS SPECTROMETRY [LARGE SCALE ANALYSIS]</scope>
</reference>
<reference key="11">
    <citation type="journal article" date="2013" name="J. Proteome Res.">
        <title>Toward a comprehensive characterization of a human cancer cell phosphoproteome.</title>
        <authorList>
            <person name="Zhou H."/>
            <person name="Di Palma S."/>
            <person name="Preisinger C."/>
            <person name="Peng M."/>
            <person name="Polat A.N."/>
            <person name="Heck A.J."/>
            <person name="Mohammed S."/>
        </authorList>
    </citation>
    <scope>PHOSPHORYLATION [LARGE SCALE ANALYSIS] AT SER-17; SER-68; SER-82; SER-83; SER-108; SER-116; SER-120; SER-123; SER-127; SER-177; SER-179; SER-216; SER-268; SER-284; SER-298; SER-333; THR-336 AND SER-351</scope>
    <scope>IDENTIFICATION BY MASS SPECTROMETRY [LARGE SCALE ANALYSIS]</scope>
    <source>
        <tissue>Erythroleukemia</tissue>
    </source>
</reference>
<reference key="12">
    <citation type="journal article" date="2014" name="J. Proteomics">
        <title>An enzyme assisted RP-RPLC approach for in-depth analysis of human liver phosphoproteome.</title>
        <authorList>
            <person name="Bian Y."/>
            <person name="Song C."/>
            <person name="Cheng K."/>
            <person name="Dong M."/>
            <person name="Wang F."/>
            <person name="Huang J."/>
            <person name="Sun D."/>
            <person name="Wang L."/>
            <person name="Ye M."/>
            <person name="Zou H."/>
        </authorList>
    </citation>
    <scope>PHOSPHORYLATION [LARGE SCALE ANALYSIS] AT SER-216</scope>
    <scope>IDENTIFICATION BY MASS SPECTROMETRY [LARGE SCALE ANALYSIS]</scope>
    <source>
        <tissue>Liver</tissue>
    </source>
</reference>
<keyword id="KW-0025">Alternative splicing</keyword>
<keyword id="KW-0597">Phosphoprotein</keyword>
<keyword id="KW-1267">Proteomics identification</keyword>
<keyword id="KW-1185">Reference proteome</keyword>
<feature type="chain" id="PRO_0000320262" description="CapZ-interacting protein">
    <location>
        <begin position="1"/>
        <end position="416"/>
    </location>
</feature>
<feature type="domain" description="RCSD">
    <location>
        <begin position="227"/>
        <end position="330"/>
    </location>
</feature>
<feature type="region of interest" description="Disordered" evidence="2">
    <location>
        <begin position="1"/>
        <end position="84"/>
    </location>
</feature>
<feature type="region of interest" description="Disordered" evidence="2">
    <location>
        <begin position="98"/>
        <end position="416"/>
    </location>
</feature>
<feature type="compositionally biased region" description="Polar residues" evidence="2">
    <location>
        <begin position="8"/>
        <end position="20"/>
    </location>
</feature>
<feature type="compositionally biased region" description="Basic residues" evidence="2">
    <location>
        <begin position="159"/>
        <end position="176"/>
    </location>
</feature>
<feature type="compositionally biased region" description="Basic and acidic residues" evidence="2">
    <location>
        <begin position="244"/>
        <end position="273"/>
    </location>
</feature>
<feature type="compositionally biased region" description="Basic and acidic residues" evidence="2">
    <location>
        <begin position="292"/>
        <end position="349"/>
    </location>
</feature>
<feature type="compositionally biased region" description="Basic and acidic residues" evidence="2">
    <location>
        <begin position="360"/>
        <end position="372"/>
    </location>
</feature>
<feature type="compositionally biased region" description="Polar residues" evidence="2">
    <location>
        <begin position="382"/>
        <end position="397"/>
    </location>
</feature>
<feature type="modified residue" description="Phosphoserine" evidence="8">
    <location>
        <position position="17"/>
    </location>
</feature>
<feature type="modified residue" description="Phosphoserine; by MAPK8; in vitro" evidence="3 8">
    <location>
        <position position="68"/>
    </location>
</feature>
<feature type="modified residue" description="Phosphoserine" evidence="8">
    <location>
        <position position="82"/>
    </location>
</feature>
<feature type="modified residue" description="Phosphoserine; by MAPK8; in vitro" evidence="3 8">
    <location>
        <position position="83"/>
    </location>
</feature>
<feature type="modified residue" description="Phosphoserine" evidence="7">
    <location>
        <position position="105"/>
    </location>
</feature>
<feature type="modified residue" description="Phosphoserine; by MAPK12 and MAPK13" evidence="3 7 8">
    <location>
        <position position="108"/>
    </location>
</feature>
<feature type="modified residue" description="Phosphoserine" evidence="7 8">
    <location>
        <position position="116"/>
    </location>
</feature>
<feature type="modified residue" description="Phosphoserine" evidence="7 8">
    <location>
        <position position="120"/>
    </location>
</feature>
<feature type="modified residue" description="Phosphoserine" evidence="7 8">
    <location>
        <position position="123"/>
    </location>
</feature>
<feature type="modified residue" description="Phosphothreonine" evidence="1">
    <location>
        <position position="124"/>
    </location>
</feature>
<feature type="modified residue" description="Phosphoserine" evidence="1">
    <location>
        <position position="126"/>
    </location>
</feature>
<feature type="modified residue" description="Phosphoserine" evidence="8">
    <location>
        <position position="127"/>
    </location>
</feature>
<feature type="modified residue" description="Phosphoserine" evidence="1">
    <location>
        <position position="135"/>
    </location>
</feature>
<feature type="modified residue" description="Phosphoserine" evidence="1">
    <location>
        <position position="143"/>
    </location>
</feature>
<feature type="modified residue" description="Phosphoserine" evidence="7 8">
    <location>
        <position position="177"/>
    </location>
</feature>
<feature type="modified residue" description="Phosphoserine; by MAPKAPK2 and MAPKAPK3" evidence="3 7 8">
    <location>
        <position position="179"/>
    </location>
</feature>
<feature type="modified residue" description="Phosphoserine; by MAPK8; in vitro" evidence="3 6 7 8 9">
    <location>
        <position position="216"/>
    </location>
</feature>
<feature type="modified residue" description="Phosphoserine; by MAPKAPK2 or MAPKAPK3; in vitro" evidence="3">
    <location>
        <position position="244"/>
    </location>
</feature>
<feature type="modified residue" description="Phosphoserine" evidence="7">
    <location>
        <position position="267"/>
    </location>
</feature>
<feature type="modified residue" description="Phosphoserine" evidence="7 8">
    <location>
        <position position="268"/>
    </location>
</feature>
<feature type="modified residue" description="Phosphoserine" evidence="7 8">
    <location>
        <position position="284"/>
    </location>
</feature>
<feature type="modified residue" description="Phosphoserine" evidence="8">
    <location>
        <position position="298"/>
    </location>
</feature>
<feature type="modified residue" description="Phosphoserine" evidence="8">
    <location>
        <position position="333"/>
    </location>
</feature>
<feature type="modified residue" description="Phosphothreonine" evidence="8">
    <location>
        <position position="336"/>
    </location>
</feature>
<feature type="modified residue" description="Phosphoserine" evidence="8">
    <location>
        <position position="351"/>
    </location>
</feature>
<feature type="splice variant" id="VSP_031648" description="In isoform 2." evidence="4">
    <location>
        <begin position="1"/>
        <end position="310"/>
    </location>
</feature>
<feature type="sequence variant" id="VAR_039181" description="In dbSNP:rs34699420.">
    <original>Q</original>
    <variation>R</variation>
    <location>
        <position position="384"/>
    </location>
</feature>
<feature type="sequence conflict" description="In Ref. 2; AAN52359." evidence="5" ref="2">
    <original>P</original>
    <variation>A</variation>
    <location>
        <position position="48"/>
    </location>
</feature>
<feature type="sequence conflict" description="In Ref. 2; AAN52359." evidence="5" ref="2">
    <original>H</original>
    <variation>Q</variation>
    <location>
        <position position="74"/>
    </location>
</feature>
<feature type="sequence conflict" description="In Ref. 2; AAN52359." evidence="5" ref="2">
    <original>D</original>
    <variation>E</variation>
    <location>
        <position position="96"/>
    </location>
</feature>
<dbReference type="EMBL" id="AY530954">
    <property type="protein sequence ID" value="AAS99235.1"/>
    <property type="molecule type" value="mRNA"/>
</dbReference>
<dbReference type="EMBL" id="AF545852">
    <property type="protein sequence ID" value="AAN52359.1"/>
    <property type="molecule type" value="mRNA"/>
</dbReference>
<dbReference type="EMBL" id="CH471067">
    <property type="protein sequence ID" value="EAW90797.1"/>
    <property type="molecule type" value="Genomic_DNA"/>
</dbReference>
<dbReference type="EMBL" id="AL031733">
    <property type="status" value="NOT_ANNOTATED_CDS"/>
    <property type="molecule type" value="Genomic_DNA"/>
</dbReference>
<dbReference type="EMBL" id="AL356532">
    <property type="status" value="NOT_ANNOTATED_CDS"/>
    <property type="molecule type" value="Genomic_DNA"/>
</dbReference>
<dbReference type="EMBL" id="BC072399">
    <property type="protein sequence ID" value="AAH72399.1"/>
    <property type="molecule type" value="mRNA"/>
</dbReference>
<dbReference type="EMBL" id="BC098426">
    <property type="protein sequence ID" value="AAH98426.1"/>
    <property type="molecule type" value="mRNA"/>
</dbReference>
<dbReference type="EMBL" id="BC101536">
    <property type="protein sequence ID" value="AAI01537.1"/>
    <property type="molecule type" value="mRNA"/>
</dbReference>
<dbReference type="EMBL" id="BC101562">
    <property type="protein sequence ID" value="AAI01563.1"/>
    <property type="molecule type" value="mRNA"/>
</dbReference>
<dbReference type="EMBL" id="BC013186">
    <property type="protein sequence ID" value="AAH13186.1"/>
    <property type="molecule type" value="mRNA"/>
</dbReference>
<dbReference type="EMBL" id="AL137762">
    <property type="protein sequence ID" value="CAB70910.1"/>
    <property type="status" value="ALT_INIT"/>
    <property type="molecule type" value="mRNA"/>
</dbReference>
<dbReference type="CCDS" id="CCDS1263.1">
    <molecule id="Q6JBY9-1"/>
</dbReference>
<dbReference type="RefSeq" id="NP_443094.3">
    <molecule id="Q6JBY9-1"/>
    <property type="nucleotide sequence ID" value="NM_052862.3"/>
</dbReference>
<dbReference type="BioGRID" id="124921">
    <property type="interactions" value="10"/>
</dbReference>
<dbReference type="FunCoup" id="Q6JBY9">
    <property type="interactions" value="48"/>
</dbReference>
<dbReference type="IntAct" id="Q6JBY9">
    <property type="interactions" value="8"/>
</dbReference>
<dbReference type="STRING" id="9606.ENSP00000356828"/>
<dbReference type="GlyGen" id="Q6JBY9">
    <property type="glycosylation" value="4 sites, 1 O-linked glycan (3 sites)"/>
</dbReference>
<dbReference type="iPTMnet" id="Q6JBY9"/>
<dbReference type="PhosphoSitePlus" id="Q6JBY9"/>
<dbReference type="BioMuta" id="RCSD1"/>
<dbReference type="DMDM" id="74758031"/>
<dbReference type="CPTAC" id="CPTAC-998"/>
<dbReference type="jPOST" id="Q6JBY9"/>
<dbReference type="MassIVE" id="Q6JBY9"/>
<dbReference type="PaxDb" id="9606-ENSP00000356828"/>
<dbReference type="PeptideAtlas" id="Q6JBY9"/>
<dbReference type="ProteomicsDB" id="66511">
    <molecule id="Q6JBY9-1"/>
</dbReference>
<dbReference type="ProteomicsDB" id="66512">
    <molecule id="Q6JBY9-2"/>
</dbReference>
<dbReference type="Pumba" id="Q6JBY9"/>
<dbReference type="Antibodypedia" id="34342">
    <property type="antibodies" value="75 antibodies from 16 providers"/>
</dbReference>
<dbReference type="DNASU" id="92241"/>
<dbReference type="Ensembl" id="ENST00000367854.8">
    <molecule id="Q6JBY9-1"/>
    <property type="protein sequence ID" value="ENSP00000356828.3"/>
    <property type="gene ID" value="ENSG00000198771.11"/>
</dbReference>
<dbReference type="GeneID" id="92241"/>
<dbReference type="KEGG" id="hsa:92241"/>
<dbReference type="MANE-Select" id="ENST00000367854.8">
    <property type="protein sequence ID" value="ENSP00000356828.3"/>
    <property type="RefSeq nucleotide sequence ID" value="NM_052862.4"/>
    <property type="RefSeq protein sequence ID" value="NP_443094.3"/>
</dbReference>
<dbReference type="UCSC" id="uc001gem.4">
    <molecule id="Q6JBY9-1"/>
    <property type="organism name" value="human"/>
</dbReference>
<dbReference type="AGR" id="HGNC:28310"/>
<dbReference type="CTD" id="92241"/>
<dbReference type="DisGeNET" id="92241"/>
<dbReference type="GeneCards" id="RCSD1"/>
<dbReference type="HGNC" id="HGNC:28310">
    <property type="gene designation" value="RCSD1"/>
</dbReference>
<dbReference type="HPA" id="ENSG00000198771">
    <property type="expression patterns" value="Tissue enhanced (lymphoid tissue, skeletal muscle)"/>
</dbReference>
<dbReference type="MIM" id="610579">
    <property type="type" value="gene"/>
</dbReference>
<dbReference type="neXtProt" id="NX_Q6JBY9"/>
<dbReference type="OpenTargets" id="ENSG00000198771"/>
<dbReference type="PharmGKB" id="PA142671088"/>
<dbReference type="VEuPathDB" id="HostDB:ENSG00000198771"/>
<dbReference type="eggNOG" id="ENOG502SRPU">
    <property type="taxonomic scope" value="Eukaryota"/>
</dbReference>
<dbReference type="GeneTree" id="ENSGT00940000153997"/>
<dbReference type="HOGENOM" id="CLU_039301_1_0_1"/>
<dbReference type="InParanoid" id="Q6JBY9"/>
<dbReference type="OMA" id="QEGAETH"/>
<dbReference type="OrthoDB" id="9450049at2759"/>
<dbReference type="PAN-GO" id="Q6JBY9">
    <property type="GO annotations" value="2 GO annotations based on evolutionary models"/>
</dbReference>
<dbReference type="PhylomeDB" id="Q6JBY9"/>
<dbReference type="TreeFam" id="TF334159"/>
<dbReference type="PathwayCommons" id="Q6JBY9"/>
<dbReference type="SignaLink" id="Q6JBY9"/>
<dbReference type="SIGNOR" id="Q6JBY9"/>
<dbReference type="BioGRID-ORCS" id="92241">
    <property type="hits" value="16 hits in 1157 CRISPR screens"/>
</dbReference>
<dbReference type="ChiTaRS" id="RCSD1">
    <property type="organism name" value="human"/>
</dbReference>
<dbReference type="GenomeRNAi" id="92241"/>
<dbReference type="Pharos" id="Q6JBY9">
    <property type="development level" value="Tbio"/>
</dbReference>
<dbReference type="PRO" id="PR:Q6JBY9"/>
<dbReference type="Proteomes" id="UP000005640">
    <property type="component" value="Chromosome 1"/>
</dbReference>
<dbReference type="RNAct" id="Q6JBY9">
    <property type="molecule type" value="protein"/>
</dbReference>
<dbReference type="Bgee" id="ENSG00000198771">
    <property type="expression patterns" value="Expressed in leukocyte and 171 other cell types or tissues"/>
</dbReference>
<dbReference type="ExpressionAtlas" id="Q6JBY9">
    <property type="expression patterns" value="baseline and differential"/>
</dbReference>
<dbReference type="GO" id="GO:0005884">
    <property type="term" value="C:actin filament"/>
    <property type="evidence" value="ECO:0000305"/>
    <property type="project" value="BHF-UCL"/>
</dbReference>
<dbReference type="GO" id="GO:0005829">
    <property type="term" value="C:cytosol"/>
    <property type="evidence" value="ECO:0007669"/>
    <property type="project" value="GOC"/>
</dbReference>
<dbReference type="GO" id="GO:0005769">
    <property type="term" value="C:early endosome"/>
    <property type="evidence" value="ECO:0000318"/>
    <property type="project" value="GO_Central"/>
</dbReference>
<dbReference type="GO" id="GO:0071203">
    <property type="term" value="C:WASH complex"/>
    <property type="evidence" value="ECO:0000318"/>
    <property type="project" value="GO_Central"/>
</dbReference>
<dbReference type="GO" id="GO:0051015">
    <property type="term" value="F:actin filament binding"/>
    <property type="evidence" value="ECO:0000353"/>
    <property type="project" value="BHF-UCL"/>
</dbReference>
<dbReference type="GO" id="GO:1901981">
    <property type="term" value="F:phosphatidylinositol phosphate binding"/>
    <property type="evidence" value="ECO:0000318"/>
    <property type="project" value="GO_Central"/>
</dbReference>
<dbReference type="GO" id="GO:1905394">
    <property type="term" value="F:retromer complex binding"/>
    <property type="evidence" value="ECO:0000318"/>
    <property type="project" value="GO_Central"/>
</dbReference>
<dbReference type="GO" id="GO:0071474">
    <property type="term" value="P:cellular hyperosmotic response"/>
    <property type="evidence" value="ECO:0000314"/>
    <property type="project" value="BHF-UCL"/>
</dbReference>
<dbReference type="GO" id="GO:0036010">
    <property type="term" value="P:protein localization to endosome"/>
    <property type="evidence" value="ECO:0000318"/>
    <property type="project" value="GO_Central"/>
</dbReference>
<dbReference type="GO" id="GO:0042147">
    <property type="term" value="P:retrograde transport, endosome to Golgi"/>
    <property type="evidence" value="ECO:0000318"/>
    <property type="project" value="GO_Central"/>
</dbReference>
<dbReference type="GO" id="GO:0003009">
    <property type="term" value="P:skeletal muscle contraction"/>
    <property type="evidence" value="ECO:0000250"/>
    <property type="project" value="BHF-UCL"/>
</dbReference>
<dbReference type="InterPro" id="IPR029341">
    <property type="entry name" value="FAM21/CAPZIP"/>
</dbReference>
<dbReference type="InterPro" id="IPR007850">
    <property type="entry name" value="RCSD"/>
</dbReference>
<dbReference type="PANTHER" id="PTHR21669:SF2">
    <property type="entry name" value="CAPZ-INTERACTING PROTEIN"/>
    <property type="match status" value="1"/>
</dbReference>
<dbReference type="PANTHER" id="PTHR21669">
    <property type="entry name" value="CAPZ-INTERACTING PROTEIN AND RELATED PROTEINS"/>
    <property type="match status" value="1"/>
</dbReference>
<dbReference type="Pfam" id="PF15255">
    <property type="entry name" value="CAP-ZIP_m"/>
    <property type="match status" value="1"/>
</dbReference>
<dbReference type="Pfam" id="PF05177">
    <property type="entry name" value="RCSD"/>
    <property type="match status" value="1"/>
</dbReference>